<accession>Q9VT20</accession>
<accession>Q4V3I3</accession>
<protein>
    <recommendedName>
        <fullName>Odorant receptor 67b</fullName>
    </recommendedName>
</protein>
<sequence length="421" mass="49516">MQDQLDHELERIDKLPKLGLLWVEYSAYALGVNIAPRKRSSKYCRLTRILVLIVNLSIIYSLVAFIMENYMISFETYVEAVLLTFQLSVGVVKMFHFQNKVESCSQLVFSTETGEVLKSLGLFQLDLPRKKELLSSVSLILLNNWMIIDRQVMFFFKIVCMPVLYYCVRPYFQYIFDCYIKDKDTCEMTLTYPAIVPYLQLGNYEFPSYVIRFFLLQSGPLWCFFAVFGFNSLFVVLTRYESGLIKVLRFLVQNSTSDILVPKDQRVKYLQCCVRLFARISSHHNQIENLFKYIILVQCSVSSILICMLLYKISTVLEVGWVWMGMIMVYFVTIALEITLYNVSAQKVESQSELLFHDWYNCSWYNESREFKFMIKMMLLFSRRTFVLSVGGFTSLSHKFLVQVFRLSANFFLLLRNMNNK</sequence>
<gene>
    <name type="primary">Or67b</name>
    <name type="ORF">CG14176</name>
</gene>
<dbReference type="EMBL" id="AE014296">
    <property type="protein sequence ID" value="AAF50236.2"/>
    <property type="molecule type" value="Genomic_DNA"/>
</dbReference>
<dbReference type="EMBL" id="BT023368">
    <property type="protein sequence ID" value="AAY55784.1"/>
    <property type="molecule type" value="mRNA"/>
</dbReference>
<dbReference type="EMBL" id="BT023373">
    <property type="protein sequence ID" value="AAY55789.1"/>
    <property type="molecule type" value="mRNA"/>
</dbReference>
<dbReference type="RefSeq" id="NP_524007.2">
    <property type="nucleotide sequence ID" value="NM_079283.5"/>
</dbReference>
<dbReference type="SMR" id="Q9VT20"/>
<dbReference type="FunCoup" id="Q9VT20">
    <property type="interactions" value="5"/>
</dbReference>
<dbReference type="IntAct" id="Q9VT20">
    <property type="interactions" value="2"/>
</dbReference>
<dbReference type="STRING" id="7227.FBpp0076149"/>
<dbReference type="PaxDb" id="7227-FBpp0076149"/>
<dbReference type="EnsemblMetazoa" id="FBtr0076420">
    <property type="protein sequence ID" value="FBpp0076149"/>
    <property type="gene ID" value="FBgn0036019"/>
</dbReference>
<dbReference type="GeneID" id="39120"/>
<dbReference type="KEGG" id="dme:Dmel_CG14176"/>
<dbReference type="AGR" id="FB:FBgn0036019"/>
<dbReference type="CTD" id="39120"/>
<dbReference type="FlyBase" id="FBgn0036019">
    <property type="gene designation" value="Or67b"/>
</dbReference>
<dbReference type="VEuPathDB" id="VectorBase:FBgn0036019"/>
<dbReference type="eggNOG" id="ENOG502QYV0">
    <property type="taxonomic scope" value="Eukaryota"/>
</dbReference>
<dbReference type="GeneTree" id="ENSGT00940000166470"/>
<dbReference type="HOGENOM" id="CLU_650953_0_0_1"/>
<dbReference type="InParanoid" id="Q9VT20"/>
<dbReference type="OMA" id="FFKIVCM"/>
<dbReference type="OrthoDB" id="6604226at2759"/>
<dbReference type="PhylomeDB" id="Q9VT20"/>
<dbReference type="BioGRID-ORCS" id="39120">
    <property type="hits" value="0 hits in 1 CRISPR screen"/>
</dbReference>
<dbReference type="GenomeRNAi" id="39120"/>
<dbReference type="PRO" id="PR:Q9VT20"/>
<dbReference type="Proteomes" id="UP000000803">
    <property type="component" value="Chromosome 3L"/>
</dbReference>
<dbReference type="Bgee" id="FBgn0036019">
    <property type="expression patterns" value="Expressed in antenna and 4 other cell types or tissues"/>
</dbReference>
<dbReference type="ExpressionAtlas" id="Q9VT20">
    <property type="expression patterns" value="baseline and differential"/>
</dbReference>
<dbReference type="GO" id="GO:0034703">
    <property type="term" value="C:cation channel complex"/>
    <property type="evidence" value="ECO:0000250"/>
    <property type="project" value="FlyBase"/>
</dbReference>
<dbReference type="GO" id="GO:0032590">
    <property type="term" value="C:dendrite membrane"/>
    <property type="evidence" value="ECO:0000250"/>
    <property type="project" value="FlyBase"/>
</dbReference>
<dbReference type="GO" id="GO:0005886">
    <property type="term" value="C:plasma membrane"/>
    <property type="evidence" value="ECO:0000250"/>
    <property type="project" value="FlyBase"/>
</dbReference>
<dbReference type="GO" id="GO:0170020">
    <property type="term" value="F:ionotropic olfactory receptor activity"/>
    <property type="evidence" value="ECO:0000250"/>
    <property type="project" value="FlyBase"/>
</dbReference>
<dbReference type="GO" id="GO:0005549">
    <property type="term" value="F:odorant binding"/>
    <property type="evidence" value="ECO:0000250"/>
    <property type="project" value="FlyBase"/>
</dbReference>
<dbReference type="GO" id="GO:0004984">
    <property type="term" value="F:olfactory receptor activity"/>
    <property type="evidence" value="ECO:0000318"/>
    <property type="project" value="GO_Central"/>
</dbReference>
<dbReference type="GO" id="GO:0050911">
    <property type="term" value="P:detection of chemical stimulus involved in sensory perception of smell"/>
    <property type="evidence" value="ECO:0000315"/>
    <property type="project" value="FlyBase"/>
</dbReference>
<dbReference type="GO" id="GO:0007165">
    <property type="term" value="P:signal transduction"/>
    <property type="evidence" value="ECO:0007669"/>
    <property type="project" value="UniProtKB-KW"/>
</dbReference>
<dbReference type="InterPro" id="IPR004117">
    <property type="entry name" value="7tm6_olfct_rcpt"/>
</dbReference>
<dbReference type="PANTHER" id="PTHR21137">
    <property type="entry name" value="ODORANT RECEPTOR"/>
    <property type="match status" value="1"/>
</dbReference>
<dbReference type="PANTHER" id="PTHR21137:SF35">
    <property type="entry name" value="ODORANT RECEPTOR 19A-RELATED"/>
    <property type="match status" value="1"/>
</dbReference>
<dbReference type="Pfam" id="PF02949">
    <property type="entry name" value="7tm_6"/>
    <property type="match status" value="1"/>
</dbReference>
<reference key="1">
    <citation type="journal article" date="2000" name="Science">
        <title>The genome sequence of Drosophila melanogaster.</title>
        <authorList>
            <person name="Adams M.D."/>
            <person name="Celniker S.E."/>
            <person name="Holt R.A."/>
            <person name="Evans C.A."/>
            <person name="Gocayne J.D."/>
            <person name="Amanatides P.G."/>
            <person name="Scherer S.E."/>
            <person name="Li P.W."/>
            <person name="Hoskins R.A."/>
            <person name="Galle R.F."/>
            <person name="George R.A."/>
            <person name="Lewis S.E."/>
            <person name="Richards S."/>
            <person name="Ashburner M."/>
            <person name="Henderson S.N."/>
            <person name="Sutton G.G."/>
            <person name="Wortman J.R."/>
            <person name="Yandell M.D."/>
            <person name="Zhang Q."/>
            <person name="Chen L.X."/>
            <person name="Brandon R.C."/>
            <person name="Rogers Y.-H.C."/>
            <person name="Blazej R.G."/>
            <person name="Champe M."/>
            <person name="Pfeiffer B.D."/>
            <person name="Wan K.H."/>
            <person name="Doyle C."/>
            <person name="Baxter E.G."/>
            <person name="Helt G."/>
            <person name="Nelson C.R."/>
            <person name="Miklos G.L.G."/>
            <person name="Abril J.F."/>
            <person name="Agbayani A."/>
            <person name="An H.-J."/>
            <person name="Andrews-Pfannkoch C."/>
            <person name="Baldwin D."/>
            <person name="Ballew R.M."/>
            <person name="Basu A."/>
            <person name="Baxendale J."/>
            <person name="Bayraktaroglu L."/>
            <person name="Beasley E.M."/>
            <person name="Beeson K.Y."/>
            <person name="Benos P.V."/>
            <person name="Berman B.P."/>
            <person name="Bhandari D."/>
            <person name="Bolshakov S."/>
            <person name="Borkova D."/>
            <person name="Botchan M.R."/>
            <person name="Bouck J."/>
            <person name="Brokstein P."/>
            <person name="Brottier P."/>
            <person name="Burtis K.C."/>
            <person name="Busam D.A."/>
            <person name="Butler H."/>
            <person name="Cadieu E."/>
            <person name="Center A."/>
            <person name="Chandra I."/>
            <person name="Cherry J.M."/>
            <person name="Cawley S."/>
            <person name="Dahlke C."/>
            <person name="Davenport L.B."/>
            <person name="Davies P."/>
            <person name="de Pablos B."/>
            <person name="Delcher A."/>
            <person name="Deng Z."/>
            <person name="Mays A.D."/>
            <person name="Dew I."/>
            <person name="Dietz S.M."/>
            <person name="Dodson K."/>
            <person name="Doup L.E."/>
            <person name="Downes M."/>
            <person name="Dugan-Rocha S."/>
            <person name="Dunkov B.C."/>
            <person name="Dunn P."/>
            <person name="Durbin K.J."/>
            <person name="Evangelista C.C."/>
            <person name="Ferraz C."/>
            <person name="Ferriera S."/>
            <person name="Fleischmann W."/>
            <person name="Fosler C."/>
            <person name="Gabrielian A.E."/>
            <person name="Garg N.S."/>
            <person name="Gelbart W.M."/>
            <person name="Glasser K."/>
            <person name="Glodek A."/>
            <person name="Gong F."/>
            <person name="Gorrell J.H."/>
            <person name="Gu Z."/>
            <person name="Guan P."/>
            <person name="Harris M."/>
            <person name="Harris N.L."/>
            <person name="Harvey D.A."/>
            <person name="Heiman T.J."/>
            <person name="Hernandez J.R."/>
            <person name="Houck J."/>
            <person name="Hostin D."/>
            <person name="Houston K.A."/>
            <person name="Howland T.J."/>
            <person name="Wei M.-H."/>
            <person name="Ibegwam C."/>
            <person name="Jalali M."/>
            <person name="Kalush F."/>
            <person name="Karpen G.H."/>
            <person name="Ke Z."/>
            <person name="Kennison J.A."/>
            <person name="Ketchum K.A."/>
            <person name="Kimmel B.E."/>
            <person name="Kodira C.D."/>
            <person name="Kraft C.L."/>
            <person name="Kravitz S."/>
            <person name="Kulp D."/>
            <person name="Lai Z."/>
            <person name="Lasko P."/>
            <person name="Lei Y."/>
            <person name="Levitsky A.A."/>
            <person name="Li J.H."/>
            <person name="Li Z."/>
            <person name="Liang Y."/>
            <person name="Lin X."/>
            <person name="Liu X."/>
            <person name="Mattei B."/>
            <person name="McIntosh T.C."/>
            <person name="McLeod M.P."/>
            <person name="McPherson D."/>
            <person name="Merkulov G."/>
            <person name="Milshina N.V."/>
            <person name="Mobarry C."/>
            <person name="Morris J."/>
            <person name="Moshrefi A."/>
            <person name="Mount S.M."/>
            <person name="Moy M."/>
            <person name="Murphy B."/>
            <person name="Murphy L."/>
            <person name="Muzny D.M."/>
            <person name="Nelson D.L."/>
            <person name="Nelson D.R."/>
            <person name="Nelson K.A."/>
            <person name="Nixon K."/>
            <person name="Nusskern D.R."/>
            <person name="Pacleb J.M."/>
            <person name="Palazzolo M."/>
            <person name="Pittman G.S."/>
            <person name="Pan S."/>
            <person name="Pollard J."/>
            <person name="Puri V."/>
            <person name="Reese M.G."/>
            <person name="Reinert K."/>
            <person name="Remington K."/>
            <person name="Saunders R.D.C."/>
            <person name="Scheeler F."/>
            <person name="Shen H."/>
            <person name="Shue B.C."/>
            <person name="Siden-Kiamos I."/>
            <person name="Simpson M."/>
            <person name="Skupski M.P."/>
            <person name="Smith T.J."/>
            <person name="Spier E."/>
            <person name="Spradling A.C."/>
            <person name="Stapleton M."/>
            <person name="Strong R."/>
            <person name="Sun E."/>
            <person name="Svirskas R."/>
            <person name="Tector C."/>
            <person name="Turner R."/>
            <person name="Venter E."/>
            <person name="Wang A.H."/>
            <person name="Wang X."/>
            <person name="Wang Z.-Y."/>
            <person name="Wassarman D.A."/>
            <person name="Weinstock G.M."/>
            <person name="Weissenbach J."/>
            <person name="Williams S.M."/>
            <person name="Woodage T."/>
            <person name="Worley K.C."/>
            <person name="Wu D."/>
            <person name="Yang S."/>
            <person name="Yao Q.A."/>
            <person name="Ye J."/>
            <person name="Yeh R.-F."/>
            <person name="Zaveri J.S."/>
            <person name="Zhan M."/>
            <person name="Zhang G."/>
            <person name="Zhao Q."/>
            <person name="Zheng L."/>
            <person name="Zheng X.H."/>
            <person name="Zhong F.N."/>
            <person name="Zhong W."/>
            <person name="Zhou X."/>
            <person name="Zhu S.C."/>
            <person name="Zhu X."/>
            <person name="Smith H.O."/>
            <person name="Gibbs R.A."/>
            <person name="Myers E.W."/>
            <person name="Rubin G.M."/>
            <person name="Venter J.C."/>
        </authorList>
    </citation>
    <scope>NUCLEOTIDE SEQUENCE [LARGE SCALE GENOMIC DNA]</scope>
    <source>
        <strain>Berkeley</strain>
    </source>
</reference>
<reference key="2">
    <citation type="journal article" date="2002" name="Genome Biol.">
        <title>Annotation of the Drosophila melanogaster euchromatic genome: a systematic review.</title>
        <authorList>
            <person name="Misra S."/>
            <person name="Crosby M.A."/>
            <person name="Mungall C.J."/>
            <person name="Matthews B.B."/>
            <person name="Campbell K.S."/>
            <person name="Hradecky P."/>
            <person name="Huang Y."/>
            <person name="Kaminker J.S."/>
            <person name="Millburn G.H."/>
            <person name="Prochnik S.E."/>
            <person name="Smith C.D."/>
            <person name="Tupy J.L."/>
            <person name="Whitfield E.J."/>
            <person name="Bayraktaroglu L."/>
            <person name="Berman B.P."/>
            <person name="Bettencourt B.R."/>
            <person name="Celniker S.E."/>
            <person name="de Grey A.D.N.J."/>
            <person name="Drysdale R.A."/>
            <person name="Harris N.L."/>
            <person name="Richter J."/>
            <person name="Russo S."/>
            <person name="Schroeder A.J."/>
            <person name="Shu S.Q."/>
            <person name="Stapleton M."/>
            <person name="Yamada C."/>
            <person name="Ashburner M."/>
            <person name="Gelbart W.M."/>
            <person name="Rubin G.M."/>
            <person name="Lewis S.E."/>
        </authorList>
    </citation>
    <scope>GENOME REANNOTATION</scope>
    <source>
        <strain>Berkeley</strain>
    </source>
</reference>
<reference key="3">
    <citation type="submission" date="2005-05" db="EMBL/GenBank/DDBJ databases">
        <authorList>
            <person name="Stapleton M."/>
            <person name="Carlson J.W."/>
            <person name="Chavez C."/>
            <person name="Frise E."/>
            <person name="George R.A."/>
            <person name="Pacleb J.M."/>
            <person name="Park S."/>
            <person name="Wan K.H."/>
            <person name="Yu C."/>
            <person name="Celniker S.E."/>
        </authorList>
    </citation>
    <scope>NUCLEOTIDE SEQUENCE [LARGE SCALE MRNA] OF 92-421</scope>
    <source>
        <strain>Berkeley</strain>
    </source>
</reference>
<reference key="4">
    <citation type="journal article" date="2010" name="Genetics">
        <title>Odorant receptor polymorphisms and natural variation in olfactory behavior in Drosophila melanogaster.</title>
        <authorList>
            <person name="Rollmann S.M."/>
            <person name="Wang P."/>
            <person name="Date P."/>
            <person name="West S.A."/>
            <person name="Mackay T.F."/>
            <person name="Anholt R.R."/>
        </authorList>
    </citation>
    <scope>FUNCTION</scope>
</reference>
<reference key="5">
    <citation type="journal article" date="2011" name="J. Neurosci.">
        <title>Similar odorants elicit different behavioral and physiological responses, some supersustained.</title>
        <authorList>
            <person name="Montague S.A."/>
            <person name="Mathew D."/>
            <person name="Carlson J.R."/>
        </authorList>
    </citation>
    <scope>FUNCTION</scope>
</reference>
<reference key="6">
    <citation type="journal article" date="2011" name="PLoS ONE">
        <title>Modeling peripheral olfactory coding in Drosophila larvae.</title>
        <authorList>
            <person name="Hoare D.J."/>
            <person name="Humble J."/>
            <person name="Jin D."/>
            <person name="Gilding N."/>
            <person name="Petersen R."/>
            <person name="Cobb M."/>
            <person name="McCrohan C."/>
        </authorList>
    </citation>
    <scope>FUNCTION</scope>
</reference>
<keyword id="KW-1003">Cell membrane</keyword>
<keyword id="KW-0472">Membrane</keyword>
<keyword id="KW-0552">Olfaction</keyword>
<keyword id="KW-0675">Receptor</keyword>
<keyword id="KW-1185">Reference proteome</keyword>
<keyword id="KW-0716">Sensory transduction</keyword>
<keyword id="KW-0807">Transducer</keyword>
<keyword id="KW-0812">Transmembrane</keyword>
<keyword id="KW-1133">Transmembrane helix</keyword>
<name>OR67B_DROME</name>
<comment type="function">
    <text evidence="3 4 5">Odorant receptor which mediates acceptance or avoidance behavior, depending on its substrates. The odorant receptor repertoire encodes a large collection of odor stimuli that vary widely in identity, intensity, and duration. May form a complex with Orco to form odorant-sensing units, providing sensitive and prolonged odorant signaling and calcium permeability. Involved in the behavioral responses to ethyl acetate, pentyl acetate, methyl caproate, anisole, heptanal, 2-heptanone, r-carvone, nonanoic acid, and pyrazines.</text>
</comment>
<comment type="subunit">
    <text evidence="1">Interacts with Orco. Complexes exist early in the endomembrane system in olfactory sensory neurons (OSNs), coupling these complexes to the conserved ciliary trafficking pathway (By similarity).</text>
</comment>
<comment type="subcellular location">
    <subcellularLocation>
        <location evidence="1">Cell membrane</location>
        <topology evidence="1">Multi-pass membrane protein</topology>
    </subcellularLocation>
</comment>
<comment type="miscellaneous">
    <text>The atypical heteromeric and topological design of the odorant receptors appears to be an insect-specific solution for odor recognition, making the OR/Orco complex an attractive target for the development of highly selective insect repellents to disrupt olfactory-mediated host-seeking behaviors of insect disease vectors. Odor-evoked OR currents are independent of known G-protein-coupled second messenger pathways.</text>
</comment>
<comment type="similarity">
    <text evidence="6">Belongs to the insect chemoreceptor superfamily. Heteromeric odorant receptor channel (TC 1.A.69) family. Or63a subfamily.</text>
</comment>
<evidence type="ECO:0000250" key="1"/>
<evidence type="ECO:0000255" key="2"/>
<evidence type="ECO:0000269" key="3">
    <source>
    </source>
</evidence>
<evidence type="ECO:0000269" key="4">
    <source>
    </source>
</evidence>
<evidence type="ECO:0000269" key="5">
    <source>
    </source>
</evidence>
<evidence type="ECO:0000305" key="6"/>
<proteinExistence type="evidence at transcript level"/>
<organism>
    <name type="scientific">Drosophila melanogaster</name>
    <name type="common">Fruit fly</name>
    <dbReference type="NCBI Taxonomy" id="7227"/>
    <lineage>
        <taxon>Eukaryota</taxon>
        <taxon>Metazoa</taxon>
        <taxon>Ecdysozoa</taxon>
        <taxon>Arthropoda</taxon>
        <taxon>Hexapoda</taxon>
        <taxon>Insecta</taxon>
        <taxon>Pterygota</taxon>
        <taxon>Neoptera</taxon>
        <taxon>Endopterygota</taxon>
        <taxon>Diptera</taxon>
        <taxon>Brachycera</taxon>
        <taxon>Muscomorpha</taxon>
        <taxon>Ephydroidea</taxon>
        <taxon>Drosophilidae</taxon>
        <taxon>Drosophila</taxon>
        <taxon>Sophophora</taxon>
    </lineage>
</organism>
<feature type="chain" id="PRO_0000174263" description="Odorant receptor 67b">
    <location>
        <begin position="1"/>
        <end position="421"/>
    </location>
</feature>
<feature type="topological domain" description="Cytoplasmic" evidence="2">
    <location>
        <begin position="1"/>
        <end position="48"/>
    </location>
</feature>
<feature type="transmembrane region" description="Helical; Name=1" evidence="2">
    <location>
        <begin position="49"/>
        <end position="69"/>
    </location>
</feature>
<feature type="topological domain" description="Extracellular" evidence="2">
    <location>
        <begin position="70"/>
        <end position="71"/>
    </location>
</feature>
<feature type="transmembrane region" description="Helical; Name=2" evidence="2">
    <location>
        <begin position="72"/>
        <end position="92"/>
    </location>
</feature>
<feature type="topological domain" description="Cytoplasmic" evidence="2">
    <location>
        <begin position="93"/>
        <end position="151"/>
    </location>
</feature>
<feature type="transmembrane region" description="Helical; Name=3" evidence="2">
    <location>
        <begin position="152"/>
        <end position="172"/>
    </location>
</feature>
<feature type="topological domain" description="Extracellular" evidence="2">
    <location>
        <begin position="173"/>
        <end position="217"/>
    </location>
</feature>
<feature type="transmembrane region" description="Helical; Name=4" evidence="2">
    <location>
        <begin position="218"/>
        <end position="238"/>
    </location>
</feature>
<feature type="topological domain" description="Cytoplasmic" evidence="2">
    <location>
        <begin position="239"/>
        <end position="289"/>
    </location>
</feature>
<feature type="transmembrane region" description="Helical; Name=5" evidence="2">
    <location>
        <begin position="290"/>
        <end position="310"/>
    </location>
</feature>
<feature type="topological domain" description="Extracellular" evidence="2">
    <location>
        <begin position="311"/>
        <end position="315"/>
    </location>
</feature>
<feature type="transmembrane region" description="Helical; Name=6" evidence="2">
    <location>
        <begin position="316"/>
        <end position="336"/>
    </location>
</feature>
<feature type="topological domain" description="Cytoplasmic" evidence="2">
    <location>
        <begin position="337"/>
        <end position="384"/>
    </location>
</feature>
<feature type="transmembrane region" description="Helical; Name=7" evidence="2">
    <location>
        <begin position="385"/>
        <end position="405"/>
    </location>
</feature>
<feature type="topological domain" description="Extracellular" evidence="2">
    <location>
        <begin position="406"/>
        <end position="421"/>
    </location>
</feature>